<protein>
    <recommendedName>
        <fullName>3-hydroxy-3-methylglutaryl-coenzyme A reductase</fullName>
        <shortName>HMG-CoA reductase</shortName>
        <ecNumber>1.1.1.34</ecNumber>
    </recommendedName>
</protein>
<keyword id="KW-0256">Endoplasmic reticulum</keyword>
<keyword id="KW-0325">Glycoprotein</keyword>
<keyword id="KW-0414">Isoprene biosynthesis</keyword>
<keyword id="KW-0472">Membrane</keyword>
<keyword id="KW-0521">NADP</keyword>
<keyword id="KW-0560">Oxidoreductase</keyword>
<keyword id="KW-1185">Reference proteome</keyword>
<keyword id="KW-0812">Transmembrane</keyword>
<keyword id="KW-1133">Transmembrane helix</keyword>
<dbReference type="EC" id="1.1.1.34"/>
<dbReference type="EMBL" id="X63649">
    <property type="protein sequence ID" value="CAA45181.1"/>
    <property type="molecule type" value="mRNA"/>
</dbReference>
<dbReference type="PIR" id="S24760">
    <property type="entry name" value="S24760"/>
</dbReference>
<dbReference type="RefSeq" id="NP_001289522.1">
    <property type="nucleotide sequence ID" value="NM_001302593.1"/>
</dbReference>
<dbReference type="SMR" id="Q01559"/>
<dbReference type="ELM" id="Q01559"/>
<dbReference type="STRING" id="4096.Q01559"/>
<dbReference type="GlyCosmos" id="Q01559">
    <property type="glycosylation" value="3 sites, No reported glycans"/>
</dbReference>
<dbReference type="GeneID" id="104230282"/>
<dbReference type="KEGG" id="nsy:104230282"/>
<dbReference type="eggNOG" id="KOG2480">
    <property type="taxonomic scope" value="Eukaryota"/>
</dbReference>
<dbReference type="UniPathway" id="UPA00058">
    <property type="reaction ID" value="UER00103"/>
</dbReference>
<dbReference type="Proteomes" id="UP000189701">
    <property type="component" value="Unplaced"/>
</dbReference>
<dbReference type="GO" id="GO:0005789">
    <property type="term" value="C:endoplasmic reticulum membrane"/>
    <property type="evidence" value="ECO:0007669"/>
    <property type="project" value="UniProtKB-SubCell"/>
</dbReference>
<dbReference type="GO" id="GO:0005778">
    <property type="term" value="C:peroxisomal membrane"/>
    <property type="evidence" value="ECO:0007669"/>
    <property type="project" value="TreeGrafter"/>
</dbReference>
<dbReference type="GO" id="GO:0004420">
    <property type="term" value="F:hydroxymethylglutaryl-CoA reductase (NADPH) activity"/>
    <property type="evidence" value="ECO:0007669"/>
    <property type="project" value="UniProtKB-EC"/>
</dbReference>
<dbReference type="GO" id="GO:0015936">
    <property type="term" value="P:coenzyme A metabolic process"/>
    <property type="evidence" value="ECO:0007669"/>
    <property type="project" value="InterPro"/>
</dbReference>
<dbReference type="GO" id="GO:0008299">
    <property type="term" value="P:isoprenoid biosynthetic process"/>
    <property type="evidence" value="ECO:0007669"/>
    <property type="project" value="UniProtKB-KW"/>
</dbReference>
<dbReference type="GO" id="GO:0016126">
    <property type="term" value="P:sterol biosynthetic process"/>
    <property type="evidence" value="ECO:0007669"/>
    <property type="project" value="TreeGrafter"/>
</dbReference>
<dbReference type="CDD" id="cd00643">
    <property type="entry name" value="HMG-CoA_reductase_classI"/>
    <property type="match status" value="1"/>
</dbReference>
<dbReference type="FunFam" id="1.10.3270.10:FF:000002">
    <property type="entry name" value="3-hydroxy-3-methylglutaryl coenzyme A reductase"/>
    <property type="match status" value="1"/>
</dbReference>
<dbReference type="FunFam" id="3.30.70.420:FF:000001">
    <property type="entry name" value="3-hydroxy-3-methylglutaryl coenzyme A reductase"/>
    <property type="match status" value="1"/>
</dbReference>
<dbReference type="FunFam" id="3.90.770.10:FF:000001">
    <property type="entry name" value="3-hydroxy-3-methylglutaryl coenzyme A reductase"/>
    <property type="match status" value="1"/>
</dbReference>
<dbReference type="Gene3D" id="3.90.770.10">
    <property type="entry name" value="3-hydroxy-3-methylglutaryl-coenzyme A Reductase, Chain A, domain 2"/>
    <property type="match status" value="1"/>
</dbReference>
<dbReference type="Gene3D" id="1.10.3270.10">
    <property type="entry name" value="HMGR, N-terminal domain"/>
    <property type="match status" value="1"/>
</dbReference>
<dbReference type="Gene3D" id="3.30.70.420">
    <property type="entry name" value="Hydroxymethylglutaryl-CoA reductase, class I/II, NAD/NADP-binding domain"/>
    <property type="match status" value="1"/>
</dbReference>
<dbReference type="InterPro" id="IPR002202">
    <property type="entry name" value="HMG_CoA_Rdtase"/>
</dbReference>
<dbReference type="InterPro" id="IPR023074">
    <property type="entry name" value="HMG_CoA_Rdtase_cat_sf"/>
</dbReference>
<dbReference type="InterPro" id="IPR023076">
    <property type="entry name" value="HMG_CoA_Rdtase_CS"/>
</dbReference>
<dbReference type="InterPro" id="IPR004554">
    <property type="entry name" value="HMG_CoA_Rdtase_eu_arc"/>
</dbReference>
<dbReference type="InterPro" id="IPR023282">
    <property type="entry name" value="HMG_CoA_Rdtase_N"/>
</dbReference>
<dbReference type="InterPro" id="IPR009023">
    <property type="entry name" value="HMG_CoA_Rdtase_NAD(P)-bd_sf"/>
</dbReference>
<dbReference type="InterPro" id="IPR009029">
    <property type="entry name" value="HMG_CoA_Rdtase_sub-bd_dom_sf"/>
</dbReference>
<dbReference type="NCBIfam" id="TIGR00533">
    <property type="entry name" value="HMG_CoA_R_NADP"/>
    <property type="match status" value="1"/>
</dbReference>
<dbReference type="PANTHER" id="PTHR10572">
    <property type="entry name" value="3-HYDROXY-3-METHYLGLUTARYL-COENZYME A REDUCTASE"/>
    <property type="match status" value="1"/>
</dbReference>
<dbReference type="PANTHER" id="PTHR10572:SF24">
    <property type="entry name" value="3-HYDROXY-3-METHYLGLUTARYL-COENZYME A REDUCTASE"/>
    <property type="match status" value="1"/>
</dbReference>
<dbReference type="Pfam" id="PF00368">
    <property type="entry name" value="HMG-CoA_red"/>
    <property type="match status" value="1"/>
</dbReference>
<dbReference type="PRINTS" id="PR00071">
    <property type="entry name" value="HMGCOARDTASE"/>
</dbReference>
<dbReference type="SUPFAM" id="SSF55035">
    <property type="entry name" value="NAD-binding domain of HMG-CoA reductase"/>
    <property type="match status" value="1"/>
</dbReference>
<dbReference type="SUPFAM" id="SSF56542">
    <property type="entry name" value="Substrate-binding domain of HMG-CoA reductase"/>
    <property type="match status" value="1"/>
</dbReference>
<dbReference type="PROSITE" id="PS00066">
    <property type="entry name" value="HMG_COA_REDUCTASE_1"/>
    <property type="match status" value="1"/>
</dbReference>
<dbReference type="PROSITE" id="PS00318">
    <property type="entry name" value="HMG_COA_REDUCTASE_2"/>
    <property type="match status" value="1"/>
</dbReference>
<dbReference type="PROSITE" id="PS01192">
    <property type="entry name" value="HMG_COA_REDUCTASE_3"/>
    <property type="match status" value="1"/>
</dbReference>
<dbReference type="PROSITE" id="PS50065">
    <property type="entry name" value="HMG_COA_REDUCTASE_4"/>
    <property type="match status" value="1"/>
</dbReference>
<accession>Q01559</accession>
<sequence length="604" mass="65085">MDVRRRSEKPAYPTKEFAAGEKPLKPHKQQQEQDNSLLIASDALPLPLYLTNGLFFTMFFSVMYYLLSRWREKIRNSTPLHVVTFSELVAIASLIASVIYLLGFFGIGFVQSFVSRDNNDECWDEEDENDEQFLLEEDSRRGPATTLGCTAVPPPPALQIVPMVPPQPSKVAAMSEKPAPLVTPAASEEDEEIIKSVVQGKMPSYSLESKLGDCKRAASIRKEALQRITGKSLEGLPLEGFDYESILGQCCEMPIGYVQIPVGIAGPLLLDGREYSVPMATTEGCLVASTNRGCKAIYASGGATSVLLRDGMTRAPCVRFGTAKRAAELKFFVEDPVKFETLAAVFNQSSRFARLQRIQCAIAGKNLYMRFVCSTGDAMGMNMVSKGVQNVLDYLQNEYPDMDVIGISGNFCSDKKPAAVNWIEGRGKSVVCEAIITEEVVKKVLKTEVAALVELNMLKNLTGSAMAGALGGFNAHASNIVSAVYIATGQDPAQNIESSHCITMMEAVNDGKDLHVSVTMPSIEVGTVGGGTQLASQSACLNLLGVKGANREVPGSNARLLATIVAGSVLAGELSLMSAISAGQLVKSHMKYNRSTKDVTKASS</sequence>
<evidence type="ECO:0000250" key="1"/>
<evidence type="ECO:0000255" key="2"/>
<evidence type="ECO:0000255" key="3">
    <source>
        <dbReference type="PROSITE-ProRule" id="PRU10003"/>
    </source>
</evidence>
<evidence type="ECO:0000256" key="4">
    <source>
        <dbReference type="SAM" id="MobiDB-lite"/>
    </source>
</evidence>
<evidence type="ECO:0000305" key="5"/>
<gene>
    <name type="primary">HMGR</name>
</gene>
<proteinExistence type="evidence at transcript level"/>
<organism>
    <name type="scientific">Nicotiana sylvestris</name>
    <name type="common">Wood tobacco</name>
    <name type="synonym">South American tobacco</name>
    <dbReference type="NCBI Taxonomy" id="4096"/>
    <lineage>
        <taxon>Eukaryota</taxon>
        <taxon>Viridiplantae</taxon>
        <taxon>Streptophyta</taxon>
        <taxon>Embryophyta</taxon>
        <taxon>Tracheophyta</taxon>
        <taxon>Spermatophyta</taxon>
        <taxon>Magnoliopsida</taxon>
        <taxon>eudicotyledons</taxon>
        <taxon>Gunneridae</taxon>
        <taxon>Pentapetalae</taxon>
        <taxon>asterids</taxon>
        <taxon>lamiids</taxon>
        <taxon>Solanales</taxon>
        <taxon>Solanaceae</taxon>
        <taxon>Nicotianoideae</taxon>
        <taxon>Nicotianeae</taxon>
        <taxon>Nicotiana</taxon>
    </lineage>
</organism>
<feature type="chain" id="PRO_0000114445" description="3-hydroxy-3-methylglutaryl-coenzyme A reductase">
    <location>
        <begin position="1"/>
        <end position="604"/>
    </location>
</feature>
<feature type="transmembrane region" description="Helical" evidence="2">
    <location>
        <begin position="40"/>
        <end position="62"/>
    </location>
</feature>
<feature type="transmembrane region" description="Helical" evidence="2">
    <location>
        <begin position="90"/>
        <end position="110"/>
    </location>
</feature>
<feature type="region of interest" description="Disordered" evidence="4">
    <location>
        <begin position="1"/>
        <end position="31"/>
    </location>
</feature>
<feature type="region of interest" description="Linker" evidence="1">
    <location>
        <begin position="111"/>
        <end position="189"/>
    </location>
</feature>
<feature type="region of interest" description="Catalytic" evidence="1">
    <location>
        <begin position="190"/>
        <end position="604"/>
    </location>
</feature>
<feature type="active site" description="Charge relay system" evidence="1">
    <location>
        <position position="283"/>
    </location>
</feature>
<feature type="active site" description="Charge relay system" evidence="1">
    <location>
        <position position="415"/>
    </location>
</feature>
<feature type="active site" description="Charge relay system" evidence="1">
    <location>
        <position position="491"/>
    </location>
</feature>
<feature type="active site" description="Proton donor" evidence="3">
    <location>
        <position position="589"/>
    </location>
</feature>
<feature type="glycosylation site" description="N-linked (GlcNAc...) asparagine" evidence="2">
    <location>
        <position position="347"/>
    </location>
</feature>
<feature type="glycosylation site" description="N-linked (GlcNAc...) asparagine" evidence="2">
    <location>
        <position position="460"/>
    </location>
</feature>
<feature type="glycosylation site" description="N-linked (GlcNAc...) asparagine" evidence="2">
    <location>
        <position position="593"/>
    </location>
</feature>
<reference key="1">
    <citation type="journal article" date="1992" name="Plant Mol. Biol.">
        <title>Isolation and characterization of a cDNA encoding a 3-hydroxy-3-methylglutaryl coenzyme A reductase from Nicotiana sylvestris.</title>
        <authorList>
            <person name="Genschik P."/>
            <person name="Criqui M.-C."/>
            <person name="Parmentier Y."/>
            <person name="Marbach J."/>
            <person name="Durr A."/>
            <person name="Fleck J."/>
            <person name="Jamet E."/>
        </authorList>
    </citation>
    <scope>NUCLEOTIDE SEQUENCE [MRNA]</scope>
    <source>
        <tissue>Protoplast</tissue>
    </source>
</reference>
<comment type="function">
    <text>Catalyzes the synthesis of mevalonate, the specific precursor of all isoprenoid compounds present in plants. Possible role in plant defense mechanisms as well as in the cell cycle.</text>
</comment>
<comment type="catalytic activity">
    <reaction evidence="3">
        <text>(R)-mevalonate + 2 NADP(+) + CoA = (3S)-3-hydroxy-3-methylglutaryl-CoA + 2 NADPH + 2 H(+)</text>
        <dbReference type="Rhea" id="RHEA:15989"/>
        <dbReference type="ChEBI" id="CHEBI:15378"/>
        <dbReference type="ChEBI" id="CHEBI:36464"/>
        <dbReference type="ChEBI" id="CHEBI:43074"/>
        <dbReference type="ChEBI" id="CHEBI:57287"/>
        <dbReference type="ChEBI" id="CHEBI:57783"/>
        <dbReference type="ChEBI" id="CHEBI:58349"/>
        <dbReference type="EC" id="1.1.1.34"/>
    </reaction>
</comment>
<comment type="pathway">
    <text>Metabolic intermediate biosynthesis; (R)-mevalonate biosynthesis; (R)-mevalonate from acetyl-CoA: step 3/3.</text>
</comment>
<comment type="subcellular location">
    <subcellularLocation>
        <location>Endoplasmic reticulum membrane</location>
        <topology>Multi-pass membrane protein</topology>
    </subcellularLocation>
</comment>
<comment type="tissue specificity">
    <text>Found in protoplasts and leaves submitted to stress. Low levels found in apexes, anthers and roots.</text>
</comment>
<comment type="developmental stage">
    <text>Expressed at highest levels during the G0-G1 transition in the cell cycle of mesophyll protoplasts.</text>
</comment>
<comment type="induction">
    <text>In leaves, by wounding, elicitation, bacterial or fungal infection.</text>
</comment>
<comment type="similarity">
    <text evidence="5">Belongs to the HMG-CoA reductase family.</text>
</comment>
<name>HMDH_NICSY</name>